<name>Y5149_BACLD</name>
<proteinExistence type="inferred from homology"/>
<accession>Q65K35</accession>
<accession>Q62VI6</accession>
<comment type="similarity">
    <text evidence="1">Belongs to the UPF0637 family.</text>
</comment>
<keyword id="KW-1185">Reference proteome</keyword>
<protein>
    <recommendedName>
        <fullName evidence="1">UPF0637 protein BLi01683/BL05149</fullName>
    </recommendedName>
</protein>
<evidence type="ECO:0000255" key="1">
    <source>
        <dbReference type="HAMAP-Rule" id="MF_01851"/>
    </source>
</evidence>
<dbReference type="EMBL" id="CP000002">
    <property type="protein sequence ID" value="AAU23222.1"/>
    <property type="molecule type" value="Genomic_DNA"/>
</dbReference>
<dbReference type="EMBL" id="AE017333">
    <property type="protein sequence ID" value="AAU40579.3"/>
    <property type="molecule type" value="Genomic_DNA"/>
</dbReference>
<dbReference type="RefSeq" id="WP_009328573.1">
    <property type="nucleotide sequence ID" value="NC_006322.1"/>
</dbReference>
<dbReference type="SMR" id="Q65K35"/>
<dbReference type="STRING" id="279010.BL05149"/>
<dbReference type="KEGG" id="bld:BLi01683"/>
<dbReference type="KEGG" id="bli:BL05149"/>
<dbReference type="eggNOG" id="COG4493">
    <property type="taxonomic scope" value="Bacteria"/>
</dbReference>
<dbReference type="HOGENOM" id="CLU_096059_0_0_9"/>
<dbReference type="Proteomes" id="UP000000606">
    <property type="component" value="Chromosome"/>
</dbReference>
<dbReference type="Gene3D" id="3.30.930.20">
    <property type="entry name" value="Protein of unknown function DUF1054"/>
    <property type="match status" value="1"/>
</dbReference>
<dbReference type="HAMAP" id="MF_01851">
    <property type="entry name" value="UPF0637"/>
    <property type="match status" value="1"/>
</dbReference>
<dbReference type="InterPro" id="IPR009403">
    <property type="entry name" value="UPF0637"/>
</dbReference>
<dbReference type="InterPro" id="IPR053707">
    <property type="entry name" value="UPF0637_domain_sf"/>
</dbReference>
<dbReference type="Pfam" id="PF06335">
    <property type="entry name" value="DUF1054"/>
    <property type="match status" value="1"/>
</dbReference>
<dbReference type="PIRSF" id="PIRSF021332">
    <property type="entry name" value="DUF1054"/>
    <property type="match status" value="1"/>
</dbReference>
<dbReference type="SUPFAM" id="SSF142913">
    <property type="entry name" value="YktB/PF0168-like"/>
    <property type="match status" value="1"/>
</dbReference>
<feature type="chain" id="PRO_0000348296" description="UPF0637 protein BLi01683/BL05149">
    <location>
        <begin position="1"/>
        <end position="211"/>
    </location>
</feature>
<sequence length="211" mass="24392">MSSLRFTEEDFRTFTIEGLDARMSVLKDTVRPKLQGLGDHFAPVLSALTGDEMFVHVAKHARRSVNPPDDSWVAFANNKRGYKKLPHFQIGLWETHVFVWFALIYESPLKQEYGQLFKKHLPDIESSIPSRFFWSADHTKPDAKRQSEMNEKDLENLFERLVNVKKAEALCGIQLSKDEVLHMSEEAFLSEIEAAFEKLAFLYRLTQKVSV</sequence>
<reference key="1">
    <citation type="journal article" date="2004" name="J. Mol. Microbiol. Biotechnol.">
        <title>The complete genome sequence of Bacillus licheniformis DSM13, an organism with great industrial potential.</title>
        <authorList>
            <person name="Veith B."/>
            <person name="Herzberg C."/>
            <person name="Steckel S."/>
            <person name="Feesche J."/>
            <person name="Maurer K.H."/>
            <person name="Ehrenreich P."/>
            <person name="Baeumer S."/>
            <person name="Henne A."/>
            <person name="Liesegang H."/>
            <person name="Merkl R."/>
            <person name="Ehrenreich A."/>
            <person name="Gottschalk G."/>
        </authorList>
    </citation>
    <scope>NUCLEOTIDE SEQUENCE [LARGE SCALE GENOMIC DNA]</scope>
    <source>
        <strain>ATCC 14580 / DSM 13 / JCM 2505 / CCUG 7422 / NBRC 12200 / NCIMB 9375 / NCTC 10341 / NRRL NRS-1264 / Gibson 46</strain>
    </source>
</reference>
<reference key="2">
    <citation type="journal article" date="2004" name="Genome Biol.">
        <title>Complete genome sequence of the industrial bacterium Bacillus licheniformis and comparisons with closely related Bacillus species.</title>
        <authorList>
            <person name="Rey M.W."/>
            <person name="Ramaiya P."/>
            <person name="Nelson B.A."/>
            <person name="Brody-Karpin S.D."/>
            <person name="Zaretsky E.J."/>
            <person name="Tang M."/>
            <person name="Lopez de Leon A."/>
            <person name="Xiang H."/>
            <person name="Gusti V."/>
            <person name="Clausen I.G."/>
            <person name="Olsen P.B."/>
            <person name="Rasmussen M.D."/>
            <person name="Andersen J.T."/>
            <person name="Joergensen P.L."/>
            <person name="Larsen T.S."/>
            <person name="Sorokin A."/>
            <person name="Bolotin A."/>
            <person name="Lapidus A."/>
            <person name="Galleron N."/>
            <person name="Ehrlich S.D."/>
            <person name="Berka R.M."/>
        </authorList>
    </citation>
    <scope>NUCLEOTIDE SEQUENCE [LARGE SCALE GENOMIC DNA]</scope>
    <source>
        <strain>ATCC 14580 / DSM 13 / JCM 2505 / CCUG 7422 / NBRC 12200 / NCIMB 9375 / NCTC 10341 / NRRL NRS-1264 / Gibson 46</strain>
    </source>
</reference>
<organism>
    <name type="scientific">Bacillus licheniformis (strain ATCC 14580 / DSM 13 / JCM 2505 / CCUG 7422 / NBRC 12200 / NCIMB 9375 / NCTC 10341 / NRRL NRS-1264 / Gibson 46)</name>
    <dbReference type="NCBI Taxonomy" id="279010"/>
    <lineage>
        <taxon>Bacteria</taxon>
        <taxon>Bacillati</taxon>
        <taxon>Bacillota</taxon>
        <taxon>Bacilli</taxon>
        <taxon>Bacillales</taxon>
        <taxon>Bacillaceae</taxon>
        <taxon>Bacillus</taxon>
    </lineage>
</organism>
<gene>
    <name type="ordered locus">BLi01683</name>
    <name type="ordered locus">BL05149</name>
</gene>